<proteinExistence type="inferred from homology"/>
<name>TSAD_KOSOT</name>
<accession>C5CD32</accession>
<organism>
    <name type="scientific">Kosmotoga olearia (strain ATCC BAA-1733 / DSM 21960 / TBF 19.5.1)</name>
    <dbReference type="NCBI Taxonomy" id="521045"/>
    <lineage>
        <taxon>Bacteria</taxon>
        <taxon>Thermotogati</taxon>
        <taxon>Thermotogota</taxon>
        <taxon>Thermotogae</taxon>
        <taxon>Kosmotogales</taxon>
        <taxon>Kosmotogaceae</taxon>
        <taxon>Kosmotoga</taxon>
    </lineage>
</organism>
<reference key="1">
    <citation type="submission" date="2009-06" db="EMBL/GenBank/DDBJ databases">
        <title>Complete sequence of Thermotogales bacterium TBF 19.5.1.</title>
        <authorList>
            <consortium name="US DOE Joint Genome Institute"/>
            <person name="Lucas S."/>
            <person name="Copeland A."/>
            <person name="Lapidus A."/>
            <person name="Glavina del Rio T."/>
            <person name="Tice H."/>
            <person name="Bruce D."/>
            <person name="Goodwin L."/>
            <person name="Pitluck S."/>
            <person name="Chertkov O."/>
            <person name="Brettin T."/>
            <person name="Detter J.C."/>
            <person name="Han C."/>
            <person name="Schmutz J."/>
            <person name="Larimer F."/>
            <person name="Land M."/>
            <person name="Hauser L."/>
            <person name="Kyrpides N."/>
            <person name="Ovchinnikova G."/>
            <person name="Noll K."/>
        </authorList>
    </citation>
    <scope>NUCLEOTIDE SEQUENCE [LARGE SCALE GENOMIC DNA]</scope>
    <source>
        <strain>ATCC BAA-1733 / DSM 21960 / TBF 19.5.1</strain>
    </source>
</reference>
<keyword id="KW-0012">Acyltransferase</keyword>
<keyword id="KW-0963">Cytoplasm</keyword>
<keyword id="KW-0408">Iron</keyword>
<keyword id="KW-0479">Metal-binding</keyword>
<keyword id="KW-1185">Reference proteome</keyword>
<keyword id="KW-0808">Transferase</keyword>
<keyword id="KW-0819">tRNA processing</keyword>
<gene>
    <name evidence="1" type="primary">tsaD</name>
    <name type="synonym">gcp</name>
    <name type="ordered locus">Kole_0251</name>
</gene>
<feature type="chain" id="PRO_1000215303" description="tRNA N6-adenosine threonylcarbamoyltransferase">
    <location>
        <begin position="1"/>
        <end position="330"/>
    </location>
</feature>
<feature type="binding site" evidence="1">
    <location>
        <position position="110"/>
    </location>
    <ligand>
        <name>Fe cation</name>
        <dbReference type="ChEBI" id="CHEBI:24875"/>
    </ligand>
</feature>
<feature type="binding site" evidence="1">
    <location>
        <position position="114"/>
    </location>
    <ligand>
        <name>Fe cation</name>
        <dbReference type="ChEBI" id="CHEBI:24875"/>
    </ligand>
</feature>
<feature type="binding site" evidence="1">
    <location>
        <begin position="133"/>
        <end position="137"/>
    </location>
    <ligand>
        <name>substrate</name>
    </ligand>
</feature>
<feature type="binding site" evidence="1">
    <location>
        <position position="166"/>
    </location>
    <ligand>
        <name>substrate</name>
    </ligand>
</feature>
<feature type="binding site" evidence="1">
    <location>
        <position position="179"/>
    </location>
    <ligand>
        <name>substrate</name>
    </ligand>
</feature>
<feature type="binding site" evidence="1">
    <location>
        <position position="268"/>
    </location>
    <ligand>
        <name>substrate</name>
    </ligand>
</feature>
<feature type="binding site" evidence="1">
    <location>
        <position position="296"/>
    </location>
    <ligand>
        <name>Fe cation</name>
        <dbReference type="ChEBI" id="CHEBI:24875"/>
    </ligand>
</feature>
<sequence>MRVLAIESSCDETAVAIVEDGKLLSSVLSSQVNIHRKYGGVVPEIAARKHLENILFLLDEALDRASLKIDDIDVFAATQGPGLVGSLLVGLSLAKGLSISLNKPFVAVNHLIGHIYANFLSFPDLEYPFLVLLVSGGHTEILLAEDWNNFKRIGKTRDDAAGEAFDKVARLLGLGYPGGPEVELAARNGNPIYRFPRALNEKGNFDFSFSGLKTSVLYFLKNNPEARIEDVAAAFQEAVIDSLLTKTFAAAKTYGINKIVFAGGVAANTRLRERANEIAKEKDINIYFPPIEFCTDNAAMIAMVAYEKAKRGIFSPIDTNAIPYLSIVSL</sequence>
<comment type="function">
    <text evidence="1">Required for the formation of a threonylcarbamoyl group on adenosine at position 37 (t(6)A37) in tRNAs that read codons beginning with adenine. Is involved in the transfer of the threonylcarbamoyl moiety of threonylcarbamoyl-AMP (TC-AMP) to the N6 group of A37, together with TsaE and TsaB. TsaD likely plays a direct catalytic role in this reaction.</text>
</comment>
<comment type="catalytic activity">
    <reaction evidence="1">
        <text>L-threonylcarbamoyladenylate + adenosine(37) in tRNA = N(6)-L-threonylcarbamoyladenosine(37) in tRNA + AMP + H(+)</text>
        <dbReference type="Rhea" id="RHEA:37059"/>
        <dbReference type="Rhea" id="RHEA-COMP:10162"/>
        <dbReference type="Rhea" id="RHEA-COMP:10163"/>
        <dbReference type="ChEBI" id="CHEBI:15378"/>
        <dbReference type="ChEBI" id="CHEBI:73682"/>
        <dbReference type="ChEBI" id="CHEBI:74411"/>
        <dbReference type="ChEBI" id="CHEBI:74418"/>
        <dbReference type="ChEBI" id="CHEBI:456215"/>
        <dbReference type="EC" id="2.3.1.234"/>
    </reaction>
</comment>
<comment type="cofactor">
    <cofactor evidence="1">
        <name>Fe(2+)</name>
        <dbReference type="ChEBI" id="CHEBI:29033"/>
    </cofactor>
    <text evidence="1">Binds 1 Fe(2+) ion per subunit.</text>
</comment>
<comment type="subcellular location">
    <subcellularLocation>
        <location evidence="1">Cytoplasm</location>
    </subcellularLocation>
</comment>
<comment type="similarity">
    <text evidence="1">Belongs to the KAE1 / TsaD family.</text>
</comment>
<protein>
    <recommendedName>
        <fullName evidence="1">tRNA N6-adenosine threonylcarbamoyltransferase</fullName>
        <ecNumber evidence="1">2.3.1.234</ecNumber>
    </recommendedName>
    <alternativeName>
        <fullName evidence="1">N6-L-threonylcarbamoyladenine synthase</fullName>
        <shortName evidence="1">t(6)A synthase</shortName>
    </alternativeName>
    <alternativeName>
        <fullName evidence="1">t(6)A37 threonylcarbamoyladenosine biosynthesis protein TsaD</fullName>
    </alternativeName>
    <alternativeName>
        <fullName evidence="1">tRNA threonylcarbamoyladenosine biosynthesis protein TsaD</fullName>
    </alternativeName>
</protein>
<evidence type="ECO:0000255" key="1">
    <source>
        <dbReference type="HAMAP-Rule" id="MF_01445"/>
    </source>
</evidence>
<dbReference type="EC" id="2.3.1.234" evidence="1"/>
<dbReference type="EMBL" id="CP001634">
    <property type="protein sequence ID" value="ACR78976.1"/>
    <property type="molecule type" value="Genomic_DNA"/>
</dbReference>
<dbReference type="RefSeq" id="WP_012744763.1">
    <property type="nucleotide sequence ID" value="NC_012785.1"/>
</dbReference>
<dbReference type="SMR" id="C5CD32"/>
<dbReference type="STRING" id="521045.Kole_0251"/>
<dbReference type="KEGG" id="kol:Kole_0251"/>
<dbReference type="eggNOG" id="COG0533">
    <property type="taxonomic scope" value="Bacteria"/>
</dbReference>
<dbReference type="HOGENOM" id="CLU_023208_0_2_0"/>
<dbReference type="OrthoDB" id="9806197at2"/>
<dbReference type="Proteomes" id="UP000002382">
    <property type="component" value="Chromosome"/>
</dbReference>
<dbReference type="GO" id="GO:0005737">
    <property type="term" value="C:cytoplasm"/>
    <property type="evidence" value="ECO:0007669"/>
    <property type="project" value="UniProtKB-SubCell"/>
</dbReference>
<dbReference type="GO" id="GO:0005506">
    <property type="term" value="F:iron ion binding"/>
    <property type="evidence" value="ECO:0007669"/>
    <property type="project" value="UniProtKB-UniRule"/>
</dbReference>
<dbReference type="GO" id="GO:0061711">
    <property type="term" value="F:N(6)-L-threonylcarbamoyladenine synthase activity"/>
    <property type="evidence" value="ECO:0007669"/>
    <property type="project" value="UniProtKB-EC"/>
</dbReference>
<dbReference type="GO" id="GO:0002949">
    <property type="term" value="P:tRNA threonylcarbamoyladenosine modification"/>
    <property type="evidence" value="ECO:0007669"/>
    <property type="project" value="UniProtKB-UniRule"/>
</dbReference>
<dbReference type="CDD" id="cd24133">
    <property type="entry name" value="ASKHA_NBD_TsaD_bac"/>
    <property type="match status" value="1"/>
</dbReference>
<dbReference type="FunFam" id="3.30.420.40:FF:000012">
    <property type="entry name" value="tRNA N6-adenosine threonylcarbamoyltransferase"/>
    <property type="match status" value="1"/>
</dbReference>
<dbReference type="FunFam" id="3.30.420.40:FF:000040">
    <property type="entry name" value="tRNA N6-adenosine threonylcarbamoyltransferase"/>
    <property type="match status" value="1"/>
</dbReference>
<dbReference type="Gene3D" id="3.30.420.40">
    <property type="match status" value="2"/>
</dbReference>
<dbReference type="HAMAP" id="MF_01445">
    <property type="entry name" value="TsaD"/>
    <property type="match status" value="1"/>
</dbReference>
<dbReference type="InterPro" id="IPR043129">
    <property type="entry name" value="ATPase_NBD"/>
</dbReference>
<dbReference type="InterPro" id="IPR000905">
    <property type="entry name" value="Gcp-like_dom"/>
</dbReference>
<dbReference type="InterPro" id="IPR017861">
    <property type="entry name" value="KAE1/TsaD"/>
</dbReference>
<dbReference type="InterPro" id="IPR017860">
    <property type="entry name" value="Peptidase_M22_CS"/>
</dbReference>
<dbReference type="InterPro" id="IPR022450">
    <property type="entry name" value="TsaD"/>
</dbReference>
<dbReference type="NCBIfam" id="TIGR00329">
    <property type="entry name" value="gcp_kae1"/>
    <property type="match status" value="1"/>
</dbReference>
<dbReference type="NCBIfam" id="TIGR03723">
    <property type="entry name" value="T6A_TsaD_YgjD"/>
    <property type="match status" value="1"/>
</dbReference>
<dbReference type="PANTHER" id="PTHR11735">
    <property type="entry name" value="TRNA N6-ADENOSINE THREONYLCARBAMOYLTRANSFERASE"/>
    <property type="match status" value="1"/>
</dbReference>
<dbReference type="PANTHER" id="PTHR11735:SF6">
    <property type="entry name" value="TRNA N6-ADENOSINE THREONYLCARBAMOYLTRANSFERASE, MITOCHONDRIAL"/>
    <property type="match status" value="1"/>
</dbReference>
<dbReference type="Pfam" id="PF00814">
    <property type="entry name" value="TsaD"/>
    <property type="match status" value="1"/>
</dbReference>
<dbReference type="PRINTS" id="PR00789">
    <property type="entry name" value="OSIALOPTASE"/>
</dbReference>
<dbReference type="SUPFAM" id="SSF53067">
    <property type="entry name" value="Actin-like ATPase domain"/>
    <property type="match status" value="2"/>
</dbReference>
<dbReference type="PROSITE" id="PS01016">
    <property type="entry name" value="GLYCOPROTEASE"/>
    <property type="match status" value="1"/>
</dbReference>